<reference key="1">
    <citation type="journal article" date="1991" name="J. Biol. Chem.">
        <title>Demonstration of apolipoprotein CII in guinea pigs. Functional characteristics, cDNA sequence, and tissue expression.</title>
        <authorList>
            <person name="Andersson Y."/>
            <person name="Thelander L."/>
            <person name="Bengtsson-Olivecrona G."/>
        </authorList>
    </citation>
    <scope>NUCLEOTIDE SEQUENCE [MRNA]</scope>
    <scope>TISSUE SPECIFICITY</scope>
</reference>
<comment type="function">
    <text evidence="1">Component of chylomicrons, very low-density lipoproteins (VLDL), low-density lipoproteins (LDL), and high-density lipoproteins (HDL) in plasma. Plays an important role in lipoprotein metabolism as an activator of lipoprotein lipase. Both proapolipoprotein C-II and apolipoprotein C-II can activate lipoprotein lipase.</text>
</comment>
<comment type="subcellular location">
    <subcellularLocation>
        <location evidence="1">Secreted</location>
    </subcellularLocation>
</comment>
<comment type="tissue specificity">
    <text evidence="3">Liver.</text>
</comment>
<comment type="PTM">
    <text evidence="1">Proapolipoprotein C-II is synthesized as a sialic acid containing glycoprotein which is subsequently desialylated prior to its proteolytic processing.</text>
</comment>
<comment type="PTM">
    <text evidence="1">Proapolipoprotein C-II, the major form found in plasma undergoes proteolytic cleavage of its N-terminal hexapeptide to generate apolipoprotein C-II, which occurs as the minor form in plasma.</text>
</comment>
<comment type="similarity">
    <text evidence="4">Belongs to the apolipoprotein C2 family.</text>
</comment>
<accession>P27916</accession>
<evidence type="ECO:0000250" key="1">
    <source>
        <dbReference type="UniProtKB" id="P02655"/>
    </source>
</evidence>
<evidence type="ECO:0000255" key="2"/>
<evidence type="ECO:0000269" key="3">
    <source>
    </source>
</evidence>
<evidence type="ECO:0000305" key="4"/>
<dbReference type="EMBL" id="M59913">
    <property type="protein sequence ID" value="AAA37031.1"/>
    <property type="molecule type" value="mRNA"/>
</dbReference>
<dbReference type="PIR" id="A38685">
    <property type="entry name" value="A38685"/>
</dbReference>
<dbReference type="RefSeq" id="NP_001166385.1">
    <property type="nucleotide sequence ID" value="NM_001172914.2"/>
</dbReference>
<dbReference type="RefSeq" id="XP_013002235.1">
    <property type="nucleotide sequence ID" value="XM_013146781.1"/>
</dbReference>
<dbReference type="SMR" id="P27916"/>
<dbReference type="FunCoup" id="P27916">
    <property type="interactions" value="12"/>
</dbReference>
<dbReference type="STRING" id="10141.ENSCPOP00000019331"/>
<dbReference type="Ensembl" id="ENSCPOT00000022988.2">
    <property type="protein sequence ID" value="ENSCPOP00000019331.1"/>
    <property type="gene ID" value="ENSCPOG00000009302.4"/>
</dbReference>
<dbReference type="GeneID" id="100135480"/>
<dbReference type="KEGG" id="cpoc:100135480"/>
<dbReference type="CTD" id="344"/>
<dbReference type="VEuPathDB" id="HostDB:ENSCPOG00000009302"/>
<dbReference type="eggNOG" id="ENOG502SEJB">
    <property type="taxonomic scope" value="Eukaryota"/>
</dbReference>
<dbReference type="GeneTree" id="ENSGT00390000007913"/>
<dbReference type="HOGENOM" id="CLU_180154_0_0_1"/>
<dbReference type="InParanoid" id="P27916"/>
<dbReference type="OMA" id="GTHEPQE"/>
<dbReference type="OrthoDB" id="9881800at2759"/>
<dbReference type="TreeFam" id="TF338218"/>
<dbReference type="Proteomes" id="UP000005447">
    <property type="component" value="Unassembled WGS sequence"/>
</dbReference>
<dbReference type="Bgee" id="ENSCPOG00000009302">
    <property type="expression patterns" value="Expressed in liver and 5 other cell types or tissues"/>
</dbReference>
<dbReference type="GO" id="GO:0042627">
    <property type="term" value="C:chylomicron"/>
    <property type="evidence" value="ECO:0007669"/>
    <property type="project" value="UniProtKB-KW"/>
</dbReference>
<dbReference type="GO" id="GO:0034363">
    <property type="term" value="C:intermediate-density lipoprotein particle"/>
    <property type="evidence" value="ECO:0007669"/>
    <property type="project" value="Ensembl"/>
</dbReference>
<dbReference type="GO" id="GO:0034362">
    <property type="term" value="C:low-density lipoprotein particle"/>
    <property type="evidence" value="ECO:0007669"/>
    <property type="project" value="UniProtKB-KW"/>
</dbReference>
<dbReference type="GO" id="GO:0034366">
    <property type="term" value="C:spherical high-density lipoprotein particle"/>
    <property type="evidence" value="ECO:0007669"/>
    <property type="project" value="Ensembl"/>
</dbReference>
<dbReference type="GO" id="GO:0034361">
    <property type="term" value="C:very-low-density lipoprotein particle"/>
    <property type="evidence" value="ECO:0007669"/>
    <property type="project" value="UniProtKB-KW"/>
</dbReference>
<dbReference type="GO" id="GO:0055102">
    <property type="term" value="F:lipase inhibitor activity"/>
    <property type="evidence" value="ECO:0007669"/>
    <property type="project" value="Ensembl"/>
</dbReference>
<dbReference type="GO" id="GO:0008289">
    <property type="term" value="F:lipid binding"/>
    <property type="evidence" value="ECO:0007669"/>
    <property type="project" value="Ensembl"/>
</dbReference>
<dbReference type="GO" id="GO:0060230">
    <property type="term" value="F:lipoprotein lipase activator activity"/>
    <property type="evidence" value="ECO:0007669"/>
    <property type="project" value="Ensembl"/>
</dbReference>
<dbReference type="GO" id="GO:0016004">
    <property type="term" value="F:phospholipase activator activity"/>
    <property type="evidence" value="ECO:0007669"/>
    <property type="project" value="Ensembl"/>
</dbReference>
<dbReference type="GO" id="GO:0043274">
    <property type="term" value="F:phospholipase binding"/>
    <property type="evidence" value="ECO:0007669"/>
    <property type="project" value="Ensembl"/>
</dbReference>
<dbReference type="GO" id="GO:0033344">
    <property type="term" value="P:cholesterol efflux"/>
    <property type="evidence" value="ECO:0007669"/>
    <property type="project" value="Ensembl"/>
</dbReference>
<dbReference type="GO" id="GO:0034382">
    <property type="term" value="P:chylomicron remnant clearance"/>
    <property type="evidence" value="ECO:0007669"/>
    <property type="project" value="Ensembl"/>
</dbReference>
<dbReference type="GO" id="GO:0034371">
    <property type="term" value="P:chylomicron remodeling"/>
    <property type="evidence" value="ECO:0007669"/>
    <property type="project" value="Ensembl"/>
</dbReference>
<dbReference type="GO" id="GO:0034384">
    <property type="term" value="P:high-density lipoprotein particle clearance"/>
    <property type="evidence" value="ECO:0007669"/>
    <property type="project" value="Ensembl"/>
</dbReference>
<dbReference type="GO" id="GO:0016042">
    <property type="term" value="P:lipid catabolic process"/>
    <property type="evidence" value="ECO:0007669"/>
    <property type="project" value="UniProtKB-KW"/>
</dbReference>
<dbReference type="GO" id="GO:0032375">
    <property type="term" value="P:negative regulation of cholesterol transport"/>
    <property type="evidence" value="ECO:0007669"/>
    <property type="project" value="Ensembl"/>
</dbReference>
<dbReference type="GO" id="GO:0045833">
    <property type="term" value="P:negative regulation of lipid metabolic process"/>
    <property type="evidence" value="ECO:0007669"/>
    <property type="project" value="Ensembl"/>
</dbReference>
<dbReference type="GO" id="GO:0048261">
    <property type="term" value="P:negative regulation of receptor-mediated endocytosis"/>
    <property type="evidence" value="ECO:0007669"/>
    <property type="project" value="Ensembl"/>
</dbReference>
<dbReference type="GO" id="GO:0010916">
    <property type="term" value="P:negative regulation of very-low-density lipoprotein particle clearance"/>
    <property type="evidence" value="ECO:0007669"/>
    <property type="project" value="Ensembl"/>
</dbReference>
<dbReference type="GO" id="GO:0033700">
    <property type="term" value="P:phospholipid efflux"/>
    <property type="evidence" value="ECO:0007669"/>
    <property type="project" value="Ensembl"/>
</dbReference>
<dbReference type="GO" id="GO:0045723">
    <property type="term" value="P:positive regulation of fatty acid biosynthetic process"/>
    <property type="evidence" value="ECO:0007669"/>
    <property type="project" value="Ensembl"/>
</dbReference>
<dbReference type="GO" id="GO:0060697">
    <property type="term" value="P:positive regulation of phospholipid catabolic process"/>
    <property type="evidence" value="ECO:0007669"/>
    <property type="project" value="Ensembl"/>
</dbReference>
<dbReference type="GO" id="GO:0010898">
    <property type="term" value="P:positive regulation of triglyceride catabolic process"/>
    <property type="evidence" value="ECO:0007669"/>
    <property type="project" value="Ensembl"/>
</dbReference>
<dbReference type="GO" id="GO:0010902">
    <property type="term" value="P:positive regulation of very-low-density lipoprotein particle remodeling"/>
    <property type="evidence" value="ECO:0007669"/>
    <property type="project" value="Ensembl"/>
</dbReference>
<dbReference type="GO" id="GO:0070328">
    <property type="term" value="P:triglyceride homeostasis"/>
    <property type="evidence" value="ECO:0007669"/>
    <property type="project" value="Ensembl"/>
</dbReference>
<dbReference type="Gene3D" id="1.10.1440.10">
    <property type="entry name" value="Apolipoprotein C-II"/>
    <property type="match status" value="1"/>
</dbReference>
<dbReference type="InterPro" id="IPR008019">
    <property type="entry name" value="Apo-CII"/>
</dbReference>
<dbReference type="InterPro" id="IPR023121">
    <property type="entry name" value="ApoC-II_dom_sf"/>
</dbReference>
<dbReference type="PANTHER" id="PTHR16566">
    <property type="entry name" value="APOLIPOPROTEIN C-II"/>
    <property type="match status" value="1"/>
</dbReference>
<dbReference type="PANTHER" id="PTHR16566:SF0">
    <property type="entry name" value="APOLIPOPROTEIN C-II"/>
    <property type="match status" value="1"/>
</dbReference>
<dbReference type="Pfam" id="PF05355">
    <property type="entry name" value="Apo-CII"/>
    <property type="match status" value="1"/>
</dbReference>
<gene>
    <name type="primary">APOC2</name>
</gene>
<name>APOC2_CAVPO</name>
<proteinExistence type="evidence at transcript level"/>
<organism>
    <name type="scientific">Cavia porcellus</name>
    <name type="common">Guinea pig</name>
    <dbReference type="NCBI Taxonomy" id="10141"/>
    <lineage>
        <taxon>Eukaryota</taxon>
        <taxon>Metazoa</taxon>
        <taxon>Chordata</taxon>
        <taxon>Craniata</taxon>
        <taxon>Vertebrata</taxon>
        <taxon>Euteleostomi</taxon>
        <taxon>Mammalia</taxon>
        <taxon>Eutheria</taxon>
        <taxon>Euarchontoglires</taxon>
        <taxon>Glires</taxon>
        <taxon>Rodentia</taxon>
        <taxon>Hystricomorpha</taxon>
        <taxon>Caviidae</taxon>
        <taxon>Cavia</taxon>
    </lineage>
</organism>
<sequence length="100" mass="10985">MDARSLLLLWLLLPLLLLLGCEVQGAHLTQQDEPTSPDLLETLSTYWDSAKAAAQGLYNNTYLPAVDETIRDIYSKGSAAISTYTGILTDQILTMLQGKQ</sequence>
<keyword id="KW-0162">Chylomicron</keyword>
<keyword id="KW-0325">Glycoprotein</keyword>
<keyword id="KW-0345">HDL</keyword>
<keyword id="KW-0427">LDL</keyword>
<keyword id="KW-0442">Lipid degradation</keyword>
<keyword id="KW-0443">Lipid metabolism</keyword>
<keyword id="KW-0445">Lipid transport</keyword>
<keyword id="KW-1185">Reference proteome</keyword>
<keyword id="KW-0964">Secreted</keyword>
<keyword id="KW-0730">Sialic acid</keyword>
<keyword id="KW-0732">Signal</keyword>
<keyword id="KW-0813">Transport</keyword>
<keyword id="KW-0850">VLDL</keyword>
<feature type="signal peptide" evidence="2">
    <location>
        <begin position="1"/>
        <end position="25"/>
    </location>
</feature>
<feature type="chain" id="PRO_0000002023" description="Proapolipoprotein C-II">
    <location>
        <begin position="26"/>
        <end position="100"/>
    </location>
</feature>
<feature type="chain" id="PRO_0000430837" description="Apolipoprotein C-II" evidence="1">
    <location>
        <begin position="32"/>
        <end position="100"/>
    </location>
</feature>
<feature type="region of interest" description="Lipid binding" evidence="1">
    <location>
        <begin position="65"/>
        <end position="73"/>
    </location>
</feature>
<feature type="region of interest" description="Lipoprotein lipase cofactor" evidence="1">
    <location>
        <begin position="77"/>
        <end position="100"/>
    </location>
</feature>
<protein>
    <recommendedName>
        <fullName>Apolipoprotein C-II</fullName>
        <shortName>Apo-CII</shortName>
        <shortName>ApoC-II</shortName>
    </recommendedName>
    <alternativeName>
        <fullName>Apolipoprotein C2</fullName>
    </alternativeName>
    <component>
        <recommendedName>
            <fullName>Proapolipoprotein C-II</fullName>
            <shortName>ProapoC-II</shortName>
        </recommendedName>
    </component>
</protein>